<feature type="chain" id="PRO_0000101735" description="NEDD8-specific protease 1">
    <location>
        <begin position="1"/>
        <end position="420"/>
    </location>
</feature>
<feature type="region of interest" description="Disordered" evidence="1">
    <location>
        <begin position="257"/>
        <end position="420"/>
    </location>
</feature>
<feature type="compositionally biased region" description="Low complexity" evidence="1">
    <location>
        <begin position="257"/>
        <end position="281"/>
    </location>
</feature>
<feature type="compositionally biased region" description="Basic and acidic residues" evidence="1">
    <location>
        <begin position="286"/>
        <end position="296"/>
    </location>
</feature>
<feature type="compositionally biased region" description="Basic residues" evidence="1">
    <location>
        <begin position="297"/>
        <end position="310"/>
    </location>
</feature>
<feature type="compositionally biased region" description="Basic and acidic residues" evidence="1">
    <location>
        <begin position="311"/>
        <end position="324"/>
    </location>
</feature>
<feature type="compositionally biased region" description="Basic and acidic residues" evidence="1">
    <location>
        <begin position="355"/>
        <end position="377"/>
    </location>
</feature>
<feature type="modified residue" description="Phosphoserine" evidence="3">
    <location>
        <position position="329"/>
    </location>
</feature>
<feature type="modified residue" description="Phosphoserine" evidence="3">
    <location>
        <position position="340"/>
    </location>
</feature>
<feature type="modified residue" description="Phosphoserine" evidence="3">
    <location>
        <position position="351"/>
    </location>
</feature>
<feature type="sequence conflict" description="In Ref. 2; BAA13818." evidence="4" ref="2">
    <original>L</original>
    <variation>W</variation>
    <location>
        <position position="57"/>
    </location>
</feature>
<feature type="sequence conflict" description="In Ref. 2; BAA13818." evidence="4" ref="2">
    <original>F</original>
    <variation>FGCYTCVV</variation>
    <location>
        <position position="420"/>
    </location>
</feature>
<name>NESP1_SCHPO</name>
<accession>O42980</accession>
<accession>P78807</accession>
<gene>
    <name type="primary">nep1</name>
    <name type="ORF">SPBC17D11.01</name>
    <name type="ORF">SPBC20F10.11</name>
</gene>
<reference key="1">
    <citation type="journal article" date="2005" name="Biochem. J.">
        <title>Nep1, a Schizosaccharomyces pombe deneddylating enzyme.</title>
        <authorList>
            <person name="Zhou L."/>
            <person name="Watts F.Z."/>
        </authorList>
    </citation>
    <scope>NUCLEOTIDE SEQUENCE [MRNA]</scope>
    <scope>FUNCTION</scope>
    <scope>INTERACTION WITH CSN5</scope>
    <scope>SUBCELLULAR LOCATION</scope>
</reference>
<reference key="2">
    <citation type="journal article" date="1997" name="DNA Res.">
        <title>Identification of open reading frames in Schizosaccharomyces pombe cDNAs.</title>
        <authorList>
            <person name="Yoshioka S."/>
            <person name="Kato K."/>
            <person name="Nakai K."/>
            <person name="Okayama H."/>
            <person name="Nojima H."/>
        </authorList>
    </citation>
    <scope>NUCLEOTIDE SEQUENCE [LARGE SCALE MRNA]</scope>
    <source>
        <strain>PR745</strain>
    </source>
</reference>
<reference key="3">
    <citation type="journal article" date="2002" name="Nature">
        <title>The genome sequence of Schizosaccharomyces pombe.</title>
        <authorList>
            <person name="Wood V."/>
            <person name="Gwilliam R."/>
            <person name="Rajandream M.A."/>
            <person name="Lyne M.H."/>
            <person name="Lyne R."/>
            <person name="Stewart A."/>
            <person name="Sgouros J.G."/>
            <person name="Peat N."/>
            <person name="Hayles J."/>
            <person name="Baker S.G."/>
            <person name="Basham D."/>
            <person name="Bowman S."/>
            <person name="Brooks K."/>
            <person name="Brown D."/>
            <person name="Brown S."/>
            <person name="Chillingworth T."/>
            <person name="Churcher C.M."/>
            <person name="Collins M."/>
            <person name="Connor R."/>
            <person name="Cronin A."/>
            <person name="Davis P."/>
            <person name="Feltwell T."/>
            <person name="Fraser A."/>
            <person name="Gentles S."/>
            <person name="Goble A."/>
            <person name="Hamlin N."/>
            <person name="Harris D.E."/>
            <person name="Hidalgo J."/>
            <person name="Hodgson G."/>
            <person name="Holroyd S."/>
            <person name="Hornsby T."/>
            <person name="Howarth S."/>
            <person name="Huckle E.J."/>
            <person name="Hunt S."/>
            <person name="Jagels K."/>
            <person name="James K.D."/>
            <person name="Jones L."/>
            <person name="Jones M."/>
            <person name="Leather S."/>
            <person name="McDonald S."/>
            <person name="McLean J."/>
            <person name="Mooney P."/>
            <person name="Moule S."/>
            <person name="Mungall K.L."/>
            <person name="Murphy L.D."/>
            <person name="Niblett D."/>
            <person name="Odell C."/>
            <person name="Oliver K."/>
            <person name="O'Neil S."/>
            <person name="Pearson D."/>
            <person name="Quail M.A."/>
            <person name="Rabbinowitsch E."/>
            <person name="Rutherford K.M."/>
            <person name="Rutter S."/>
            <person name="Saunders D."/>
            <person name="Seeger K."/>
            <person name="Sharp S."/>
            <person name="Skelton J."/>
            <person name="Simmonds M.N."/>
            <person name="Squares R."/>
            <person name="Squares S."/>
            <person name="Stevens K."/>
            <person name="Taylor K."/>
            <person name="Taylor R.G."/>
            <person name="Tivey A."/>
            <person name="Walsh S.V."/>
            <person name="Warren T."/>
            <person name="Whitehead S."/>
            <person name="Woodward J.R."/>
            <person name="Volckaert G."/>
            <person name="Aert R."/>
            <person name="Robben J."/>
            <person name="Grymonprez B."/>
            <person name="Weltjens I."/>
            <person name="Vanstreels E."/>
            <person name="Rieger M."/>
            <person name="Schaefer M."/>
            <person name="Mueller-Auer S."/>
            <person name="Gabel C."/>
            <person name="Fuchs M."/>
            <person name="Duesterhoeft A."/>
            <person name="Fritzc C."/>
            <person name="Holzer E."/>
            <person name="Moestl D."/>
            <person name="Hilbert H."/>
            <person name="Borzym K."/>
            <person name="Langer I."/>
            <person name="Beck A."/>
            <person name="Lehrach H."/>
            <person name="Reinhardt R."/>
            <person name="Pohl T.M."/>
            <person name="Eger P."/>
            <person name="Zimmermann W."/>
            <person name="Wedler H."/>
            <person name="Wambutt R."/>
            <person name="Purnelle B."/>
            <person name="Goffeau A."/>
            <person name="Cadieu E."/>
            <person name="Dreano S."/>
            <person name="Gloux S."/>
            <person name="Lelaure V."/>
            <person name="Mottier S."/>
            <person name="Galibert F."/>
            <person name="Aves S.J."/>
            <person name="Xiang Z."/>
            <person name="Hunt C."/>
            <person name="Moore K."/>
            <person name="Hurst S.M."/>
            <person name="Lucas M."/>
            <person name="Rochet M."/>
            <person name="Gaillardin C."/>
            <person name="Tallada V.A."/>
            <person name="Garzon A."/>
            <person name="Thode G."/>
            <person name="Daga R.R."/>
            <person name="Cruzado L."/>
            <person name="Jimenez J."/>
            <person name="Sanchez M."/>
            <person name="del Rey F."/>
            <person name="Benito J."/>
            <person name="Dominguez A."/>
            <person name="Revuelta J.L."/>
            <person name="Moreno S."/>
            <person name="Armstrong J."/>
            <person name="Forsburg S.L."/>
            <person name="Cerutti L."/>
            <person name="Lowe T."/>
            <person name="McCombie W.R."/>
            <person name="Paulsen I."/>
            <person name="Potashkin J."/>
            <person name="Shpakovski G.V."/>
            <person name="Ussery D."/>
            <person name="Barrell B.G."/>
            <person name="Nurse P."/>
        </authorList>
    </citation>
    <scope>NUCLEOTIDE SEQUENCE [LARGE SCALE GENOMIC DNA]</scope>
    <source>
        <strain>972 / ATCC 24843</strain>
    </source>
</reference>
<reference key="4">
    <citation type="journal article" date="2008" name="J. Proteome Res.">
        <title>Phosphoproteome analysis of fission yeast.</title>
        <authorList>
            <person name="Wilson-Grady J.T."/>
            <person name="Villen J."/>
            <person name="Gygi S.P."/>
        </authorList>
    </citation>
    <scope>PHOSPHORYLATION [LARGE SCALE ANALYSIS] AT SER-329; SER-340 AND SER-351</scope>
    <scope>IDENTIFICATION BY MASS SPECTROMETRY</scope>
</reference>
<protein>
    <recommendedName>
        <fullName>NEDD8-specific protease 1</fullName>
        <ecNumber>3.4.22.-</ecNumber>
    </recommendedName>
</protein>
<proteinExistence type="evidence at protein level"/>
<evidence type="ECO:0000256" key="1">
    <source>
        <dbReference type="SAM" id="MobiDB-lite"/>
    </source>
</evidence>
<evidence type="ECO:0000269" key="2">
    <source>
    </source>
</evidence>
<evidence type="ECO:0000269" key="3">
    <source>
    </source>
</evidence>
<evidence type="ECO:0000305" key="4"/>
<organism>
    <name type="scientific">Schizosaccharomyces pombe (strain 972 / ATCC 24843)</name>
    <name type="common">Fission yeast</name>
    <dbReference type="NCBI Taxonomy" id="284812"/>
    <lineage>
        <taxon>Eukaryota</taxon>
        <taxon>Fungi</taxon>
        <taxon>Dikarya</taxon>
        <taxon>Ascomycota</taxon>
        <taxon>Taphrinomycotina</taxon>
        <taxon>Schizosaccharomycetes</taxon>
        <taxon>Schizosaccharomycetales</taxon>
        <taxon>Schizosaccharomycetaceae</taxon>
        <taxon>Schizosaccharomyces</taxon>
    </lineage>
</organism>
<sequence length="420" mass="47258">MSSSPTVLELFDVCFKQEDVDSLKKPNWFTDVSIDYVDELIEHLWFPSYPNQANEILLLRPSLVFLLAEAAISPEELKVALPKKLMNCKYLFMPINDLDKHAAGSGGSHWSLMVASIPDGQCYYYDSLSNGKTKDCRSALARVSDLFKKKFTIECMPVQQQRNGYDCGAHVCAFTLELVRRLLHSPMPTSSMWNLSTFQPDVTAIREQLSRCLDHIINSLGTRVSGDFDEDFPTGTVFFDLESHLPLLDVALPVLPKSSDSSETSHESSNSNLKKSSESGSTNHHNNHESDKDLHHEGHHHHHHHHHHHHSHDDDPSSPAEKKQNHVPSPSEKIQDHVPSPSEKKQDRVPSPSNNKEDHLPLLSDEKLDKSAIDKIEPTPLPSVHMNSHIAKGELPKFHNSTDNPFLTPPEELVSGDFPF</sequence>
<dbReference type="EC" id="3.4.22.-"/>
<dbReference type="EMBL" id="D89156">
    <property type="protein sequence ID" value="BAA13818.1"/>
    <property type="molecule type" value="mRNA"/>
</dbReference>
<dbReference type="EMBL" id="CU329671">
    <property type="protein sequence ID" value="CAA16851.2"/>
    <property type="molecule type" value="Genomic_DNA"/>
</dbReference>
<dbReference type="PIR" id="T39712">
    <property type="entry name" value="T39712"/>
</dbReference>
<dbReference type="PIR" id="T42516">
    <property type="entry name" value="T42516"/>
</dbReference>
<dbReference type="RefSeq" id="NP_596375.2">
    <property type="nucleotide sequence ID" value="NM_001022296.2"/>
</dbReference>
<dbReference type="SMR" id="O42980"/>
<dbReference type="BioGRID" id="276358">
    <property type="interactions" value="11"/>
</dbReference>
<dbReference type="FunCoup" id="O42980">
    <property type="interactions" value="1"/>
</dbReference>
<dbReference type="STRING" id="284812.O42980"/>
<dbReference type="MEROPS" id="C48.025"/>
<dbReference type="iPTMnet" id="O42980"/>
<dbReference type="SwissPalm" id="O42980"/>
<dbReference type="PaxDb" id="4896-SPBC17D11.01.1"/>
<dbReference type="EnsemblFungi" id="SPBC17D11.01.1">
    <property type="protein sequence ID" value="SPBC17D11.01.1:pep"/>
    <property type="gene ID" value="SPBC17D11.01"/>
</dbReference>
<dbReference type="GeneID" id="2539808"/>
<dbReference type="KEGG" id="spo:2539808"/>
<dbReference type="PomBase" id="SPBC17D11.01">
    <property type="gene designation" value="nep1"/>
</dbReference>
<dbReference type="VEuPathDB" id="FungiDB:SPBC17D11.01"/>
<dbReference type="eggNOG" id="KOG3246">
    <property type="taxonomic scope" value="Eukaryota"/>
</dbReference>
<dbReference type="HOGENOM" id="CLU_054090_0_0_1"/>
<dbReference type="InParanoid" id="O42980"/>
<dbReference type="PhylomeDB" id="O42980"/>
<dbReference type="Reactome" id="R-SPO-5689603">
    <property type="pathway name" value="UCH proteinases"/>
</dbReference>
<dbReference type="Reactome" id="R-SPO-8951664">
    <property type="pathway name" value="Neddylation"/>
</dbReference>
<dbReference type="PRO" id="PR:O42980"/>
<dbReference type="Proteomes" id="UP000002485">
    <property type="component" value="Chromosome II"/>
</dbReference>
<dbReference type="GO" id="GO:0005737">
    <property type="term" value="C:cytoplasm"/>
    <property type="evidence" value="ECO:0000314"/>
    <property type="project" value="PomBase"/>
</dbReference>
<dbReference type="GO" id="GO:0008234">
    <property type="term" value="F:cysteine-type peptidase activity"/>
    <property type="evidence" value="ECO:0007669"/>
    <property type="project" value="UniProtKB-KW"/>
</dbReference>
<dbReference type="GO" id="GO:0019784">
    <property type="term" value="F:deNEDDylase activity"/>
    <property type="evidence" value="ECO:0000314"/>
    <property type="project" value="PomBase"/>
</dbReference>
<dbReference type="GO" id="GO:0000338">
    <property type="term" value="P:protein deneddylation"/>
    <property type="evidence" value="ECO:0000314"/>
    <property type="project" value="PomBase"/>
</dbReference>
<dbReference type="GO" id="GO:0006508">
    <property type="term" value="P:proteolysis"/>
    <property type="evidence" value="ECO:0007669"/>
    <property type="project" value="UniProtKB-KW"/>
</dbReference>
<dbReference type="FunFam" id="3.40.395.10:FF:000008">
    <property type="entry name" value="Ulp1 protease family protein"/>
    <property type="match status" value="1"/>
</dbReference>
<dbReference type="Gene3D" id="3.40.395.10">
    <property type="entry name" value="Adenoviral Proteinase, Chain A"/>
    <property type="match status" value="1"/>
</dbReference>
<dbReference type="InterPro" id="IPR044613">
    <property type="entry name" value="Nep1/2-like"/>
</dbReference>
<dbReference type="InterPro" id="IPR038765">
    <property type="entry name" value="Papain-like_cys_pep_sf"/>
</dbReference>
<dbReference type="InterPro" id="IPR003653">
    <property type="entry name" value="Peptidase_C48_C"/>
</dbReference>
<dbReference type="PANTHER" id="PTHR46468">
    <property type="entry name" value="SENTRIN-SPECIFIC PROTEASE 8"/>
    <property type="match status" value="1"/>
</dbReference>
<dbReference type="PANTHER" id="PTHR46468:SF1">
    <property type="entry name" value="SENTRIN-SPECIFIC PROTEASE 8"/>
    <property type="match status" value="1"/>
</dbReference>
<dbReference type="Pfam" id="PF02902">
    <property type="entry name" value="Peptidase_C48"/>
    <property type="match status" value="1"/>
</dbReference>
<dbReference type="SUPFAM" id="SSF54001">
    <property type="entry name" value="Cysteine proteinases"/>
    <property type="match status" value="1"/>
</dbReference>
<dbReference type="PROSITE" id="PS50600">
    <property type="entry name" value="ULP_PROTEASE"/>
    <property type="match status" value="1"/>
</dbReference>
<keyword id="KW-0963">Cytoplasm</keyword>
<keyword id="KW-0378">Hydrolase</keyword>
<keyword id="KW-0597">Phosphoprotein</keyword>
<keyword id="KW-0645">Protease</keyword>
<keyword id="KW-1185">Reference proteome</keyword>
<keyword id="KW-0788">Thiol protease</keyword>
<comment type="function">
    <text evidence="2">Protease that catalyzes two essential functions in the NEDD8 pathway: processing of full-length NEDD8 to its mature form and deconjugation of NEDD8 from targeted proteins such as the pcu1, pcu2 and pcu4 cullins and other proteins.</text>
</comment>
<comment type="subunit">
    <text evidence="2">Interacts with csn1. It is, however, not a component of the signalosome.</text>
</comment>
<comment type="subcellular location">
    <subcellularLocation>
        <location evidence="2">Cytoplasm</location>
    </subcellularLocation>
</comment>
<comment type="similarity">
    <text evidence="4">Belongs to the peptidase C48 family.</text>
</comment>